<dbReference type="EMBL" id="AF076275">
    <property type="status" value="NOT_ANNOTATED_CDS"/>
    <property type="molecule type" value="Genomic_DNA"/>
</dbReference>
<dbReference type="EMBL" id="AL161511">
    <property type="status" value="NOT_ANNOTATED_CDS"/>
    <property type="molecule type" value="Genomic_DNA"/>
</dbReference>
<dbReference type="EMBL" id="CP002687">
    <property type="protein sequence ID" value="AEE82650.1"/>
    <property type="molecule type" value="Genomic_DNA"/>
</dbReference>
<dbReference type="RefSeq" id="NP_001031595.1">
    <property type="nucleotide sequence ID" value="NM_001036518.1"/>
</dbReference>
<dbReference type="SMR" id="Q2V3K7"/>
<dbReference type="STRING" id="3702.Q2V3K7"/>
<dbReference type="GlyGen" id="Q2V3K7">
    <property type="glycosylation" value="1 site"/>
</dbReference>
<dbReference type="PaxDb" id="3702-AT4G08485.1"/>
<dbReference type="EnsemblPlants" id="AT4G08485.1">
    <property type="protein sequence ID" value="AT4G08485.1"/>
    <property type="gene ID" value="AT4G08485"/>
</dbReference>
<dbReference type="GeneID" id="3770077"/>
<dbReference type="Gramene" id="AT4G08485.1">
    <property type="protein sequence ID" value="AT4G08485.1"/>
    <property type="gene ID" value="AT4G08485"/>
</dbReference>
<dbReference type="KEGG" id="ath:AT4G08485"/>
<dbReference type="Araport" id="AT4G08485"/>
<dbReference type="TAIR" id="AT4G08485"/>
<dbReference type="HOGENOM" id="CLU_180309_0_0_1"/>
<dbReference type="InParanoid" id="Q2V3K7"/>
<dbReference type="OMA" id="FCDECAN"/>
<dbReference type="PhylomeDB" id="Q2V3K7"/>
<dbReference type="PRO" id="PR:Q2V3K7"/>
<dbReference type="Proteomes" id="UP000006548">
    <property type="component" value="Chromosome 4"/>
</dbReference>
<dbReference type="ExpressionAtlas" id="Q2V3K7">
    <property type="expression patterns" value="baseline"/>
</dbReference>
<dbReference type="GO" id="GO:0005576">
    <property type="term" value="C:extracellular region"/>
    <property type="evidence" value="ECO:0007669"/>
    <property type="project" value="UniProtKB-SubCell"/>
</dbReference>
<dbReference type="GO" id="GO:0050832">
    <property type="term" value="P:defense response to fungus"/>
    <property type="evidence" value="ECO:0007669"/>
    <property type="project" value="UniProtKB-KW"/>
</dbReference>
<dbReference type="GO" id="GO:0031640">
    <property type="term" value="P:killing of cells of another organism"/>
    <property type="evidence" value="ECO:0007669"/>
    <property type="project" value="UniProtKB-KW"/>
</dbReference>
<reference key="1">
    <citation type="journal article" date="1999" name="Nature">
        <title>Sequence and analysis of chromosome 4 of the plant Arabidopsis thaliana.</title>
        <authorList>
            <person name="Mayer K.F.X."/>
            <person name="Schueller C."/>
            <person name="Wambutt R."/>
            <person name="Murphy G."/>
            <person name="Volckaert G."/>
            <person name="Pohl T."/>
            <person name="Duesterhoeft A."/>
            <person name="Stiekema W."/>
            <person name="Entian K.-D."/>
            <person name="Terryn N."/>
            <person name="Harris B."/>
            <person name="Ansorge W."/>
            <person name="Brandt P."/>
            <person name="Grivell L.A."/>
            <person name="Rieger M."/>
            <person name="Weichselgartner M."/>
            <person name="de Simone V."/>
            <person name="Obermaier B."/>
            <person name="Mache R."/>
            <person name="Mueller M."/>
            <person name="Kreis M."/>
            <person name="Delseny M."/>
            <person name="Puigdomenech P."/>
            <person name="Watson M."/>
            <person name="Schmidtheini T."/>
            <person name="Reichert B."/>
            <person name="Portetelle D."/>
            <person name="Perez-Alonso M."/>
            <person name="Boutry M."/>
            <person name="Bancroft I."/>
            <person name="Vos P."/>
            <person name="Hoheisel J."/>
            <person name="Zimmermann W."/>
            <person name="Wedler H."/>
            <person name="Ridley P."/>
            <person name="Langham S.-A."/>
            <person name="McCullagh B."/>
            <person name="Bilham L."/>
            <person name="Robben J."/>
            <person name="van der Schueren J."/>
            <person name="Grymonprez B."/>
            <person name="Chuang Y.-J."/>
            <person name="Vandenbussche F."/>
            <person name="Braeken M."/>
            <person name="Weltjens I."/>
            <person name="Voet M."/>
            <person name="Bastiaens I."/>
            <person name="Aert R."/>
            <person name="Defoor E."/>
            <person name="Weitzenegger T."/>
            <person name="Bothe G."/>
            <person name="Ramsperger U."/>
            <person name="Hilbert H."/>
            <person name="Braun M."/>
            <person name="Holzer E."/>
            <person name="Brandt A."/>
            <person name="Peters S."/>
            <person name="van Staveren M."/>
            <person name="Dirkse W."/>
            <person name="Mooijman P."/>
            <person name="Klein Lankhorst R."/>
            <person name="Rose M."/>
            <person name="Hauf J."/>
            <person name="Koetter P."/>
            <person name="Berneiser S."/>
            <person name="Hempel S."/>
            <person name="Feldpausch M."/>
            <person name="Lamberth S."/>
            <person name="Van den Daele H."/>
            <person name="De Keyser A."/>
            <person name="Buysshaert C."/>
            <person name="Gielen J."/>
            <person name="Villarroel R."/>
            <person name="De Clercq R."/>
            <person name="van Montagu M."/>
            <person name="Rogers J."/>
            <person name="Cronin A."/>
            <person name="Quail M.A."/>
            <person name="Bray-Allen S."/>
            <person name="Clark L."/>
            <person name="Doggett J."/>
            <person name="Hall S."/>
            <person name="Kay M."/>
            <person name="Lennard N."/>
            <person name="McLay K."/>
            <person name="Mayes R."/>
            <person name="Pettett A."/>
            <person name="Rajandream M.A."/>
            <person name="Lyne M."/>
            <person name="Benes V."/>
            <person name="Rechmann S."/>
            <person name="Borkova D."/>
            <person name="Bloecker H."/>
            <person name="Scharfe M."/>
            <person name="Grimm M."/>
            <person name="Loehnert T.-H."/>
            <person name="Dose S."/>
            <person name="de Haan M."/>
            <person name="Maarse A.C."/>
            <person name="Schaefer M."/>
            <person name="Mueller-Auer S."/>
            <person name="Gabel C."/>
            <person name="Fuchs M."/>
            <person name="Fartmann B."/>
            <person name="Granderath K."/>
            <person name="Dauner D."/>
            <person name="Herzl A."/>
            <person name="Neumann S."/>
            <person name="Argiriou A."/>
            <person name="Vitale D."/>
            <person name="Liguori R."/>
            <person name="Piravandi E."/>
            <person name="Massenet O."/>
            <person name="Quigley F."/>
            <person name="Clabauld G."/>
            <person name="Muendlein A."/>
            <person name="Felber R."/>
            <person name="Schnabl S."/>
            <person name="Hiller R."/>
            <person name="Schmidt W."/>
            <person name="Lecharny A."/>
            <person name="Aubourg S."/>
            <person name="Chefdor F."/>
            <person name="Cooke R."/>
            <person name="Berger C."/>
            <person name="Monfort A."/>
            <person name="Casacuberta E."/>
            <person name="Gibbons T."/>
            <person name="Weber N."/>
            <person name="Vandenbol M."/>
            <person name="Bargues M."/>
            <person name="Terol J."/>
            <person name="Torres A."/>
            <person name="Perez-Perez A."/>
            <person name="Purnelle B."/>
            <person name="Bent E."/>
            <person name="Johnson S."/>
            <person name="Tacon D."/>
            <person name="Jesse T."/>
            <person name="Heijnen L."/>
            <person name="Schwarz S."/>
            <person name="Scholler P."/>
            <person name="Heber S."/>
            <person name="Francs P."/>
            <person name="Bielke C."/>
            <person name="Frishman D."/>
            <person name="Haase D."/>
            <person name="Lemcke K."/>
            <person name="Mewes H.-W."/>
            <person name="Stocker S."/>
            <person name="Zaccaria P."/>
            <person name="Bevan M."/>
            <person name="Wilson R.K."/>
            <person name="de la Bastide M."/>
            <person name="Habermann K."/>
            <person name="Parnell L."/>
            <person name="Dedhia N."/>
            <person name="Gnoj L."/>
            <person name="Schutz K."/>
            <person name="Huang E."/>
            <person name="Spiegel L."/>
            <person name="Sekhon M."/>
            <person name="Murray J."/>
            <person name="Sheet P."/>
            <person name="Cordes M."/>
            <person name="Abu-Threideh J."/>
            <person name="Stoneking T."/>
            <person name="Kalicki J."/>
            <person name="Graves T."/>
            <person name="Harmon G."/>
            <person name="Edwards J."/>
            <person name="Latreille P."/>
            <person name="Courtney L."/>
            <person name="Cloud J."/>
            <person name="Abbott A."/>
            <person name="Scott K."/>
            <person name="Johnson D."/>
            <person name="Minx P."/>
            <person name="Bentley D."/>
            <person name="Fulton B."/>
            <person name="Miller N."/>
            <person name="Greco T."/>
            <person name="Kemp K."/>
            <person name="Kramer J."/>
            <person name="Fulton L."/>
            <person name="Mardis E."/>
            <person name="Dante M."/>
            <person name="Pepin K."/>
            <person name="Hillier L.W."/>
            <person name="Nelson J."/>
            <person name="Spieth J."/>
            <person name="Ryan E."/>
            <person name="Andrews S."/>
            <person name="Geisel C."/>
            <person name="Layman D."/>
            <person name="Du H."/>
            <person name="Ali J."/>
            <person name="Berghoff A."/>
            <person name="Jones K."/>
            <person name="Drone K."/>
            <person name="Cotton M."/>
            <person name="Joshu C."/>
            <person name="Antonoiu B."/>
            <person name="Zidanic M."/>
            <person name="Strong C."/>
            <person name="Sun H."/>
            <person name="Lamar B."/>
            <person name="Yordan C."/>
            <person name="Ma P."/>
            <person name="Zhong J."/>
            <person name="Preston R."/>
            <person name="Vil D."/>
            <person name="Shekher M."/>
            <person name="Matero A."/>
            <person name="Shah R."/>
            <person name="Swaby I.K."/>
            <person name="O'Shaughnessy A."/>
            <person name="Rodriguez M."/>
            <person name="Hoffman J."/>
            <person name="Till S."/>
            <person name="Granat S."/>
            <person name="Shohdy N."/>
            <person name="Hasegawa A."/>
            <person name="Hameed A."/>
            <person name="Lodhi M."/>
            <person name="Johnson A."/>
            <person name="Chen E."/>
            <person name="Marra M.A."/>
            <person name="Martienssen R."/>
            <person name="McCombie W.R."/>
        </authorList>
    </citation>
    <scope>NUCLEOTIDE SEQUENCE [LARGE SCALE GENOMIC DNA]</scope>
    <source>
        <strain>cv. Columbia</strain>
    </source>
</reference>
<reference key="2">
    <citation type="journal article" date="2017" name="Plant J.">
        <title>Araport11: a complete reannotation of the Arabidopsis thaliana reference genome.</title>
        <authorList>
            <person name="Cheng C.Y."/>
            <person name="Krishnakumar V."/>
            <person name="Chan A.P."/>
            <person name="Thibaud-Nissen F."/>
            <person name="Schobel S."/>
            <person name="Town C.D."/>
        </authorList>
    </citation>
    <scope>GENOME REANNOTATION</scope>
    <source>
        <strain>cv. Columbia</strain>
    </source>
</reference>
<reference key="3">
    <citation type="journal article" date="2005" name="Plant Physiol.">
        <title>Genome organization of more than 300 defensin-like genes in Arabidopsis.</title>
        <authorList>
            <person name="Silverstein K.A.T."/>
            <person name="Graham M.A."/>
            <person name="Paape T.D."/>
            <person name="VandenBosch K.A."/>
        </authorList>
    </citation>
    <scope>GENE FAMILY</scope>
</reference>
<sequence>MNTIVLFLTLLILVSSCTSIVMKSSNSKERTYPVTPALNPLTGQHSLRQRQLIFCDECANACFRRKKPVRSCQRFICRCAIRDVGY</sequence>
<evidence type="ECO:0000250" key="1"/>
<evidence type="ECO:0000255" key="2"/>
<evidence type="ECO:0000305" key="3"/>
<keyword id="KW-0929">Antimicrobial</keyword>
<keyword id="KW-1015">Disulfide bond</keyword>
<keyword id="KW-0295">Fungicide</keyword>
<keyword id="KW-0611">Plant defense</keyword>
<keyword id="KW-1185">Reference proteome</keyword>
<keyword id="KW-0964">Secreted</keyword>
<keyword id="KW-0732">Signal</keyword>
<organism>
    <name type="scientific">Arabidopsis thaliana</name>
    <name type="common">Mouse-ear cress</name>
    <dbReference type="NCBI Taxonomy" id="3702"/>
    <lineage>
        <taxon>Eukaryota</taxon>
        <taxon>Viridiplantae</taxon>
        <taxon>Streptophyta</taxon>
        <taxon>Embryophyta</taxon>
        <taxon>Tracheophyta</taxon>
        <taxon>Spermatophyta</taxon>
        <taxon>Magnoliopsida</taxon>
        <taxon>eudicotyledons</taxon>
        <taxon>Gunneridae</taxon>
        <taxon>Pentapetalae</taxon>
        <taxon>rosids</taxon>
        <taxon>malvids</taxon>
        <taxon>Brassicales</taxon>
        <taxon>Brassicaceae</taxon>
        <taxon>Camelineae</taxon>
        <taxon>Arabidopsis</taxon>
    </lineage>
</organism>
<proteinExistence type="inferred from homology"/>
<name>DF211_ARATH</name>
<gene>
    <name type="ordered locus">At4g08485</name>
    <name type="ORF">T15F16</name>
</gene>
<feature type="signal peptide" evidence="2">
    <location>
        <begin position="1"/>
        <end position="19"/>
    </location>
</feature>
<feature type="chain" id="PRO_0000379703" description="Putative defensin-like protein 211">
    <location>
        <begin position="20"/>
        <end position="86"/>
    </location>
</feature>
<feature type="disulfide bond" evidence="1">
    <location>
        <begin position="55"/>
        <end position="72"/>
    </location>
</feature>
<feature type="disulfide bond" evidence="1">
    <location>
        <begin position="58"/>
        <end position="77"/>
    </location>
</feature>
<feature type="disulfide bond" evidence="1">
    <location>
        <begin position="62"/>
        <end position="79"/>
    </location>
</feature>
<accession>Q2V3K7</accession>
<protein>
    <recommendedName>
        <fullName>Putative defensin-like protein 211</fullName>
    </recommendedName>
</protein>
<comment type="subcellular location">
    <subcellularLocation>
        <location evidence="1">Secreted</location>
    </subcellularLocation>
</comment>
<comment type="similarity">
    <text evidence="3">Belongs to the DEFL family.</text>
</comment>
<comment type="caution">
    <text evidence="3">Lacks 1 of the 4 disulfide bonds, which are conserved features of the family.</text>
</comment>